<protein>
    <recommendedName>
        <fullName evidence="1">NADH-quinone oxidoreductase subunit K</fullName>
        <ecNumber evidence="1">7.1.1.-</ecNumber>
    </recommendedName>
    <alternativeName>
        <fullName evidence="1">NADH dehydrogenase I subunit K</fullName>
    </alternativeName>
    <alternativeName>
        <fullName evidence="1">NDH-1 subunit K</fullName>
    </alternativeName>
</protein>
<feature type="chain" id="PRO_0000390107" description="NADH-quinone oxidoreductase subunit K">
    <location>
        <begin position="1"/>
        <end position="106"/>
    </location>
</feature>
<feature type="transmembrane region" description="Helical" evidence="1">
    <location>
        <begin position="10"/>
        <end position="30"/>
    </location>
</feature>
<feature type="transmembrane region" description="Helical" evidence="1">
    <location>
        <begin position="34"/>
        <end position="54"/>
    </location>
</feature>
<feature type="transmembrane region" description="Helical" evidence="1">
    <location>
        <begin position="67"/>
        <end position="87"/>
    </location>
</feature>
<comment type="function">
    <text evidence="1">NDH-1 shuttles electrons from NADH, via FMN and iron-sulfur (Fe-S) centers, to quinones in the respiratory chain. The immediate electron acceptor for the enzyme in this species is believed to be ubiquinone. Couples the redox reaction to proton translocation (for every two electrons transferred, four hydrogen ions are translocated across the cytoplasmic membrane), and thus conserves the redox energy in a proton gradient.</text>
</comment>
<comment type="catalytic activity">
    <reaction evidence="1">
        <text>a quinone + NADH + 5 H(+)(in) = a quinol + NAD(+) + 4 H(+)(out)</text>
        <dbReference type="Rhea" id="RHEA:57888"/>
        <dbReference type="ChEBI" id="CHEBI:15378"/>
        <dbReference type="ChEBI" id="CHEBI:24646"/>
        <dbReference type="ChEBI" id="CHEBI:57540"/>
        <dbReference type="ChEBI" id="CHEBI:57945"/>
        <dbReference type="ChEBI" id="CHEBI:132124"/>
    </reaction>
</comment>
<comment type="subunit">
    <text evidence="1">NDH-1 is composed of 14 different subunits. Subunits NuoA, H, J, K, L, M, N constitute the membrane sector of the complex.</text>
</comment>
<comment type="subcellular location">
    <subcellularLocation>
        <location evidence="1">Cell inner membrane</location>
        <topology evidence="1">Multi-pass membrane protein</topology>
    </subcellularLocation>
</comment>
<comment type="similarity">
    <text evidence="1">Belongs to the complex I subunit 4L family.</text>
</comment>
<evidence type="ECO:0000255" key="1">
    <source>
        <dbReference type="HAMAP-Rule" id="MF_01456"/>
    </source>
</evidence>
<reference key="1">
    <citation type="journal article" date="2008" name="PLoS ONE">
        <title>Genome sequence of the saprophyte Leptospira biflexa provides insights into the evolution of Leptospira and the pathogenesis of leptospirosis.</title>
        <authorList>
            <person name="Picardeau M."/>
            <person name="Bulach D.M."/>
            <person name="Bouchier C."/>
            <person name="Zuerner R.L."/>
            <person name="Zidane N."/>
            <person name="Wilson P.J."/>
            <person name="Creno S."/>
            <person name="Kuczek E.S."/>
            <person name="Bommezzadri S."/>
            <person name="Davis J.C."/>
            <person name="McGrath A."/>
            <person name="Johnson M.J."/>
            <person name="Boursaux-Eude C."/>
            <person name="Seemann T."/>
            <person name="Rouy Z."/>
            <person name="Coppel R.L."/>
            <person name="Rood J.I."/>
            <person name="Lajus A."/>
            <person name="Davies J.K."/>
            <person name="Medigue C."/>
            <person name="Adler B."/>
        </authorList>
    </citation>
    <scope>NUCLEOTIDE SEQUENCE [LARGE SCALE GENOMIC DNA]</scope>
    <source>
        <strain>Patoc 1 / Ames</strain>
    </source>
</reference>
<name>NUOK_LEPBA</name>
<gene>
    <name evidence="1" type="primary">nuoK</name>
    <name type="ordered locus">LBF_1250</name>
</gene>
<accession>B0SFU2</accession>
<proteinExistence type="inferred from homology"/>
<organism>
    <name type="scientific">Leptospira biflexa serovar Patoc (strain Patoc 1 / Ames)</name>
    <dbReference type="NCBI Taxonomy" id="355278"/>
    <lineage>
        <taxon>Bacteria</taxon>
        <taxon>Pseudomonadati</taxon>
        <taxon>Spirochaetota</taxon>
        <taxon>Spirochaetia</taxon>
        <taxon>Leptospirales</taxon>
        <taxon>Leptospiraceae</taxon>
        <taxon>Leptospira</taxon>
    </lineage>
</organism>
<sequence>MNQIINGIPVTYILGLAGILFSIGVLGVLIRRNIVIIFMSVELILNSVNLVFVTFSKALSHINGETIVFFVMAIAAAEAAVGLALVIAIFRHKKSTNVDELQSMKW</sequence>
<dbReference type="EC" id="7.1.1.-" evidence="1"/>
<dbReference type="EMBL" id="CP000777">
    <property type="protein sequence ID" value="ABZ93772.1"/>
    <property type="molecule type" value="Genomic_DNA"/>
</dbReference>
<dbReference type="RefSeq" id="WP_012388295.1">
    <property type="nucleotide sequence ID" value="NC_010842.1"/>
</dbReference>
<dbReference type="SMR" id="B0SFU2"/>
<dbReference type="KEGG" id="lbf:LBF_1250"/>
<dbReference type="HOGENOM" id="CLU_144724_0_0_12"/>
<dbReference type="GO" id="GO:0030964">
    <property type="term" value="C:NADH dehydrogenase complex"/>
    <property type="evidence" value="ECO:0007669"/>
    <property type="project" value="TreeGrafter"/>
</dbReference>
<dbReference type="GO" id="GO:0005886">
    <property type="term" value="C:plasma membrane"/>
    <property type="evidence" value="ECO:0007669"/>
    <property type="project" value="UniProtKB-SubCell"/>
</dbReference>
<dbReference type="GO" id="GO:0050136">
    <property type="term" value="F:NADH:ubiquinone reductase (non-electrogenic) activity"/>
    <property type="evidence" value="ECO:0007669"/>
    <property type="project" value="UniProtKB-UniRule"/>
</dbReference>
<dbReference type="GO" id="GO:0048038">
    <property type="term" value="F:quinone binding"/>
    <property type="evidence" value="ECO:0007669"/>
    <property type="project" value="UniProtKB-KW"/>
</dbReference>
<dbReference type="GO" id="GO:0042773">
    <property type="term" value="P:ATP synthesis coupled electron transport"/>
    <property type="evidence" value="ECO:0007669"/>
    <property type="project" value="InterPro"/>
</dbReference>
<dbReference type="FunFam" id="1.10.287.3510:FF:000001">
    <property type="entry name" value="NADH-quinone oxidoreductase subunit K"/>
    <property type="match status" value="1"/>
</dbReference>
<dbReference type="Gene3D" id="1.10.287.3510">
    <property type="match status" value="1"/>
</dbReference>
<dbReference type="HAMAP" id="MF_01456">
    <property type="entry name" value="NDH1_NuoK"/>
    <property type="match status" value="1"/>
</dbReference>
<dbReference type="InterPro" id="IPR001133">
    <property type="entry name" value="NADH_UbQ_OxRdtase_chain4L/K"/>
</dbReference>
<dbReference type="InterPro" id="IPR039428">
    <property type="entry name" value="NUOK/Mnh_C1-like"/>
</dbReference>
<dbReference type="NCBIfam" id="NF004320">
    <property type="entry name" value="PRK05715.1-2"/>
    <property type="match status" value="1"/>
</dbReference>
<dbReference type="NCBIfam" id="NF004321">
    <property type="entry name" value="PRK05715.1-3"/>
    <property type="match status" value="1"/>
</dbReference>
<dbReference type="PANTHER" id="PTHR11434:SF21">
    <property type="entry name" value="NADH DEHYDROGENASE SUBUNIT 4L-RELATED"/>
    <property type="match status" value="1"/>
</dbReference>
<dbReference type="PANTHER" id="PTHR11434">
    <property type="entry name" value="NADH-UBIQUINONE OXIDOREDUCTASE SUBUNIT ND4L"/>
    <property type="match status" value="1"/>
</dbReference>
<dbReference type="Pfam" id="PF00420">
    <property type="entry name" value="Oxidored_q2"/>
    <property type="match status" value="1"/>
</dbReference>
<keyword id="KW-0997">Cell inner membrane</keyword>
<keyword id="KW-1003">Cell membrane</keyword>
<keyword id="KW-0472">Membrane</keyword>
<keyword id="KW-0520">NAD</keyword>
<keyword id="KW-0874">Quinone</keyword>
<keyword id="KW-1278">Translocase</keyword>
<keyword id="KW-0812">Transmembrane</keyword>
<keyword id="KW-1133">Transmembrane helix</keyword>
<keyword id="KW-0813">Transport</keyword>
<keyword id="KW-0830">Ubiquinone</keyword>